<proteinExistence type="evidence at protein level"/>
<comment type="function">
    <text evidence="1">Component of the small ribosomal subunit. The ribosome is a large ribonucleoprotein complex responsible for the synthesis of proteins in the cell. Part of the small subunit (SSU) processome, first precursor of the small eukaryotic ribosomal subunit. During the assembly of the SSU processome in the nucleolus, many ribosome biogenesis factors, an RNA chaperone and ribosomal proteins associate with the nascent pre-rRNA and work in concert to generate RNA folding, modifications, rearrangements and cleavage as well as targeted degradation of pre-ribosomal RNA by the RNA exosome.</text>
</comment>
<comment type="subunit">
    <text evidence="1">Component of the small ribosomal subunit. Part of the small subunit (SSU) processome, composed of more than 70 proteins and the RNA chaperone small nucleolar RNA (snoRNA) U3.</text>
</comment>
<comment type="subcellular location">
    <subcellularLocation>
        <location evidence="1">Cytoplasm</location>
    </subcellularLocation>
    <subcellularLocation>
        <location evidence="1">Nucleus</location>
        <location evidence="1">Nucleolus</location>
    </subcellularLocation>
</comment>
<comment type="PTM">
    <text evidence="1">Ubiquitinated at Lys-27 by RNF14 and RNF25 in response to ribosome collisions (ribosome stalling).</text>
</comment>
<comment type="similarity">
    <text evidence="3">Belongs to the universal ribosomal protein uS15 family.</text>
</comment>
<organism>
    <name type="scientific">Rattus norvegicus</name>
    <name type="common">Rat</name>
    <dbReference type="NCBI Taxonomy" id="10116"/>
    <lineage>
        <taxon>Eukaryota</taxon>
        <taxon>Metazoa</taxon>
        <taxon>Chordata</taxon>
        <taxon>Craniata</taxon>
        <taxon>Vertebrata</taxon>
        <taxon>Euteleostomi</taxon>
        <taxon>Mammalia</taxon>
        <taxon>Eutheria</taxon>
        <taxon>Euarchontoglires</taxon>
        <taxon>Glires</taxon>
        <taxon>Rodentia</taxon>
        <taxon>Myomorpha</taxon>
        <taxon>Muroidea</taxon>
        <taxon>Muridae</taxon>
        <taxon>Murinae</taxon>
        <taxon>Rattus</taxon>
    </lineage>
</organism>
<dbReference type="EMBL" id="X53378">
    <property type="protein sequence ID" value="CAA37458.1"/>
    <property type="molecule type" value="mRNA"/>
</dbReference>
<dbReference type="EMBL" id="BC084724">
    <property type="protein sequence ID" value="AAH84724.1"/>
    <property type="molecule type" value="mRNA"/>
</dbReference>
<dbReference type="EMBL" id="L01123">
    <property type="protein sequence ID" value="AAB59695.1"/>
    <property type="molecule type" value="mRNA"/>
</dbReference>
<dbReference type="PIR" id="A35889">
    <property type="entry name" value="R3RT13"/>
</dbReference>
<dbReference type="RefSeq" id="NP_569116.1">
    <property type="nucleotide sequence ID" value="NM_130432.2"/>
</dbReference>
<dbReference type="RefSeq" id="XP_001053043.1">
    <property type="nucleotide sequence ID" value="XM_001053043.5"/>
</dbReference>
<dbReference type="RefSeq" id="XP_003753737.1">
    <property type="nucleotide sequence ID" value="XM_003753689.3"/>
</dbReference>
<dbReference type="SMR" id="P62278"/>
<dbReference type="BioGRID" id="250909">
    <property type="interactions" value="5"/>
</dbReference>
<dbReference type="FunCoup" id="P62278">
    <property type="interactions" value="2440"/>
</dbReference>
<dbReference type="IntAct" id="P62278">
    <property type="interactions" value="10"/>
</dbReference>
<dbReference type="MINT" id="P62278"/>
<dbReference type="STRING" id="10116.ENSRNOP00000036690"/>
<dbReference type="iPTMnet" id="P62278"/>
<dbReference type="PhosphoSitePlus" id="P62278"/>
<dbReference type="jPOST" id="P62278"/>
<dbReference type="PaxDb" id="10116-ENSRNOP00000027803"/>
<dbReference type="Ensembl" id="ENSRNOT00000096261.1">
    <property type="protein sequence ID" value="ENSRNOP00000095846.1"/>
    <property type="gene ID" value="ENSRNOG00000067444.1"/>
</dbReference>
<dbReference type="GeneID" id="161477"/>
<dbReference type="KEGG" id="rno:161477"/>
<dbReference type="UCSC" id="RGD:621027">
    <property type="organism name" value="rat"/>
</dbReference>
<dbReference type="AGR" id="RGD:621027"/>
<dbReference type="CTD" id="6207"/>
<dbReference type="RGD" id="621027">
    <property type="gene designation" value="Rps13"/>
</dbReference>
<dbReference type="VEuPathDB" id="HostDB:ENSRNOG00000038746"/>
<dbReference type="eggNOG" id="KOG0400">
    <property type="taxonomic scope" value="Eukaryota"/>
</dbReference>
<dbReference type="GeneTree" id="ENSGT00390000017491"/>
<dbReference type="HOGENOM" id="CLU_090139_1_0_1"/>
<dbReference type="InParanoid" id="P62278"/>
<dbReference type="OMA" id="MHTRRKG"/>
<dbReference type="OrthoDB" id="623277at2759"/>
<dbReference type="PhylomeDB" id="P62278"/>
<dbReference type="TreeFam" id="TF300190"/>
<dbReference type="Reactome" id="R-RNO-156827">
    <property type="pathway name" value="L13a-mediated translational silencing of Ceruloplasmin expression"/>
</dbReference>
<dbReference type="Reactome" id="R-RNO-1799339">
    <property type="pathway name" value="SRP-dependent cotranslational protein targeting to membrane"/>
</dbReference>
<dbReference type="Reactome" id="R-RNO-6791226">
    <property type="pathway name" value="Major pathway of rRNA processing in the nucleolus and cytosol"/>
</dbReference>
<dbReference type="Reactome" id="R-RNO-72649">
    <property type="pathway name" value="Translation initiation complex formation"/>
</dbReference>
<dbReference type="Reactome" id="R-RNO-72689">
    <property type="pathway name" value="Formation of a pool of free 40S subunits"/>
</dbReference>
<dbReference type="Reactome" id="R-RNO-72695">
    <property type="pathway name" value="Formation of the ternary complex, and subsequently, the 43S complex"/>
</dbReference>
<dbReference type="Reactome" id="R-RNO-72702">
    <property type="pathway name" value="Ribosomal scanning and start codon recognition"/>
</dbReference>
<dbReference type="Reactome" id="R-RNO-72706">
    <property type="pathway name" value="GTP hydrolysis and joining of the 60S ribosomal subunit"/>
</dbReference>
<dbReference type="Reactome" id="R-RNO-975956">
    <property type="pathway name" value="Nonsense Mediated Decay (NMD) independent of the Exon Junction Complex (EJC)"/>
</dbReference>
<dbReference type="Reactome" id="R-RNO-975957">
    <property type="pathway name" value="Nonsense Mediated Decay (NMD) enhanced by the Exon Junction Complex (EJC)"/>
</dbReference>
<dbReference type="PRO" id="PR:P62278"/>
<dbReference type="Proteomes" id="UP000002494">
    <property type="component" value="Chromosome 3"/>
</dbReference>
<dbReference type="Bgee" id="ENSRNOG00000028021">
    <property type="expression patterns" value="Expressed in thymus and 19 other cell types or tissues"/>
</dbReference>
<dbReference type="GO" id="GO:0022626">
    <property type="term" value="C:cytosolic ribosome"/>
    <property type="evidence" value="ECO:0000266"/>
    <property type="project" value="RGD"/>
</dbReference>
<dbReference type="GO" id="GO:0022627">
    <property type="term" value="C:cytosolic small ribosomal subunit"/>
    <property type="evidence" value="ECO:0000314"/>
    <property type="project" value="RGD"/>
</dbReference>
<dbReference type="GO" id="GO:0005730">
    <property type="term" value="C:nucleolus"/>
    <property type="evidence" value="ECO:0000266"/>
    <property type="project" value="RGD"/>
</dbReference>
<dbReference type="GO" id="GO:0005634">
    <property type="term" value="C:nucleus"/>
    <property type="evidence" value="ECO:0000266"/>
    <property type="project" value="RGD"/>
</dbReference>
<dbReference type="GO" id="GO:0098794">
    <property type="term" value="C:postsynapse"/>
    <property type="evidence" value="ECO:0000303"/>
    <property type="project" value="SynGO"/>
</dbReference>
<dbReference type="GO" id="GO:0014069">
    <property type="term" value="C:postsynaptic density"/>
    <property type="evidence" value="ECO:0000266"/>
    <property type="project" value="RGD"/>
</dbReference>
<dbReference type="GO" id="GO:0098793">
    <property type="term" value="C:presynapse"/>
    <property type="evidence" value="ECO:0000303"/>
    <property type="project" value="SynGO"/>
</dbReference>
<dbReference type="GO" id="GO:0005840">
    <property type="term" value="C:ribosome"/>
    <property type="evidence" value="ECO:0000303"/>
    <property type="project" value="SynGO"/>
</dbReference>
<dbReference type="GO" id="GO:0032040">
    <property type="term" value="C:small-subunit processome"/>
    <property type="evidence" value="ECO:0000250"/>
    <property type="project" value="UniProtKB"/>
</dbReference>
<dbReference type="GO" id="GO:0045202">
    <property type="term" value="C:synapse"/>
    <property type="evidence" value="ECO:0000314"/>
    <property type="project" value="SynGO"/>
</dbReference>
<dbReference type="GO" id="GO:1990932">
    <property type="term" value="F:5.8S rRNA binding"/>
    <property type="evidence" value="ECO:0000314"/>
    <property type="project" value="RGD"/>
</dbReference>
<dbReference type="GO" id="GO:0048027">
    <property type="term" value="F:mRNA 5'-UTR binding"/>
    <property type="evidence" value="ECO:0000266"/>
    <property type="project" value="RGD"/>
</dbReference>
<dbReference type="GO" id="GO:0003729">
    <property type="term" value="F:mRNA binding"/>
    <property type="evidence" value="ECO:0000266"/>
    <property type="project" value="RGD"/>
</dbReference>
<dbReference type="GO" id="GO:0070181">
    <property type="term" value="F:small ribosomal subunit rRNA binding"/>
    <property type="evidence" value="ECO:0000318"/>
    <property type="project" value="GO_Central"/>
</dbReference>
<dbReference type="GO" id="GO:0003735">
    <property type="term" value="F:structural constituent of ribosome"/>
    <property type="evidence" value="ECO:0000266"/>
    <property type="project" value="RGD"/>
</dbReference>
<dbReference type="GO" id="GO:0033119">
    <property type="term" value="P:negative regulation of RNA splicing"/>
    <property type="evidence" value="ECO:0000266"/>
    <property type="project" value="RGD"/>
</dbReference>
<dbReference type="GO" id="GO:0042274">
    <property type="term" value="P:ribosomal small subunit biogenesis"/>
    <property type="evidence" value="ECO:0000250"/>
    <property type="project" value="UniProtKB"/>
</dbReference>
<dbReference type="GO" id="GO:0140242">
    <property type="term" value="P:translation at postsynapse"/>
    <property type="evidence" value="ECO:0000303"/>
    <property type="project" value="SynGO"/>
</dbReference>
<dbReference type="GO" id="GO:0140236">
    <property type="term" value="P:translation at presynapse"/>
    <property type="evidence" value="ECO:0000303"/>
    <property type="project" value="SynGO"/>
</dbReference>
<dbReference type="CDD" id="cd00353">
    <property type="entry name" value="Ribosomal_S15p_S13e"/>
    <property type="match status" value="1"/>
</dbReference>
<dbReference type="FunFam" id="1.10.287.10:FF:000003">
    <property type="entry name" value="40S ribosomal protein S13"/>
    <property type="match status" value="1"/>
</dbReference>
<dbReference type="FunFam" id="4.10.860.130:FF:000001">
    <property type="entry name" value="40S ribosomal protein S13"/>
    <property type="match status" value="1"/>
</dbReference>
<dbReference type="Gene3D" id="4.10.860.130">
    <property type="match status" value="1"/>
</dbReference>
<dbReference type="Gene3D" id="1.10.287.10">
    <property type="entry name" value="S15/NS1, RNA-binding"/>
    <property type="match status" value="1"/>
</dbReference>
<dbReference type="HAMAP" id="MF_01343_A">
    <property type="entry name" value="Ribosomal_uS15_A"/>
    <property type="match status" value="1"/>
</dbReference>
<dbReference type="InterPro" id="IPR000589">
    <property type="entry name" value="Ribosomal_uS15"/>
</dbReference>
<dbReference type="InterPro" id="IPR023029">
    <property type="entry name" value="Ribosomal_uS15_arc_euk"/>
</dbReference>
<dbReference type="InterPro" id="IPR012606">
    <property type="entry name" value="Ribosomal_uS15_N"/>
</dbReference>
<dbReference type="InterPro" id="IPR009068">
    <property type="entry name" value="uS15_NS1_RNA-bd_sf"/>
</dbReference>
<dbReference type="NCBIfam" id="NF006331">
    <property type="entry name" value="PRK08561.1"/>
    <property type="match status" value="1"/>
</dbReference>
<dbReference type="PANTHER" id="PTHR11885">
    <property type="entry name" value="RIBOSOMAL PROTEIN S15P/S13E"/>
    <property type="match status" value="1"/>
</dbReference>
<dbReference type="PANTHER" id="PTHR11885:SF6">
    <property type="entry name" value="SMALL RIBOSOMAL SUBUNIT PROTEIN US15"/>
    <property type="match status" value="1"/>
</dbReference>
<dbReference type="Pfam" id="PF08069">
    <property type="entry name" value="Ribosomal_S13_N"/>
    <property type="match status" value="1"/>
</dbReference>
<dbReference type="Pfam" id="PF00312">
    <property type="entry name" value="Ribosomal_S15"/>
    <property type="match status" value="1"/>
</dbReference>
<dbReference type="SMART" id="SM01386">
    <property type="entry name" value="Ribosomal_S13_N"/>
    <property type="match status" value="1"/>
</dbReference>
<dbReference type="SMART" id="SM01387">
    <property type="entry name" value="Ribosomal_S15"/>
    <property type="match status" value="1"/>
</dbReference>
<dbReference type="SUPFAM" id="SSF47060">
    <property type="entry name" value="S15/NS1 RNA-binding domain"/>
    <property type="match status" value="1"/>
</dbReference>
<dbReference type="PROSITE" id="PS00362">
    <property type="entry name" value="RIBOSOMAL_S15"/>
    <property type="match status" value="1"/>
</dbReference>
<accession>P62278</accession>
<accession>P19116</accession>
<accession>Q02546</accession>
<accession>Q29200</accession>
<gene>
    <name type="primary">Rps13</name>
</gene>
<protein>
    <recommendedName>
        <fullName evidence="3">Small ribosomal subunit protein uS15</fullName>
    </recommendedName>
    <alternativeName>
        <fullName>40S ribosomal protein S13</fullName>
    </alternativeName>
</protein>
<feature type="chain" id="PRO_0000115664" description="Small ribosomal subunit protein uS15">
    <location>
        <begin position="1"/>
        <end position="151"/>
    </location>
</feature>
<feature type="modified residue" description="N6-acetyllysine; alternate" evidence="1">
    <location>
        <position position="27"/>
    </location>
</feature>
<feature type="modified residue" description="N6-succinyllysine; alternate" evidence="2">
    <location>
        <position position="27"/>
    </location>
</feature>
<feature type="modified residue" description="Phosphoserine" evidence="1">
    <location>
        <position position="30"/>
    </location>
</feature>
<feature type="modified residue" description="N6-succinyllysine" evidence="2">
    <location>
        <position position="34"/>
    </location>
</feature>
<feature type="modified residue" description="Phosphotyrosine" evidence="1">
    <location>
        <position position="38"/>
    </location>
</feature>
<feature type="cross-link" description="Glycyl lysine isopeptide (Lys-Gly) (interchain with G-Cter in ubiquitin)" evidence="1">
    <location>
        <position position="27"/>
    </location>
</feature>
<feature type="cross-link" description="Glycyl lysine isopeptide (Lys-Gly) (interchain with G-Cter in SUMO2)" evidence="1">
    <location>
        <position position="43"/>
    </location>
</feature>
<keyword id="KW-0007">Acetylation</keyword>
<keyword id="KW-0963">Cytoplasm</keyword>
<keyword id="KW-0903">Direct protein sequencing</keyword>
<keyword id="KW-1017">Isopeptide bond</keyword>
<keyword id="KW-0539">Nucleus</keyword>
<keyword id="KW-0597">Phosphoprotein</keyword>
<keyword id="KW-1185">Reference proteome</keyword>
<keyword id="KW-0687">Ribonucleoprotein</keyword>
<keyword id="KW-0689">Ribosomal protein</keyword>
<keyword id="KW-0832">Ubl conjugation</keyword>
<sequence>MGRMHAPGKGLSQSALPYRRSVPTWLKLTSDDVKEQIYKLAKKGLTPSQIGVILRDSHGVAQVRFVTGNKILRILKSKGLAPDLPEDLYHLIKKAVAVRKHLERNRKDKDAKFRLILIESRIHRLARYYKTKRVLPPNWKYESSTASALVA</sequence>
<reference key="1">
    <citation type="journal article" date="1990" name="Biochem. Biophys. Res. Commun.">
        <title>The primary structure of rat ribosomal protein S13.</title>
        <authorList>
            <person name="Suzuki K."/>
            <person name="Olvera J."/>
            <person name="Wool I.G."/>
        </authorList>
    </citation>
    <scope>NUCLEOTIDE SEQUENCE [MRNA]</scope>
    <scope>PROTEIN SEQUENCE OF N-TERMINUS</scope>
    <source>
        <strain>Sprague-Dawley</strain>
        <tissue>Liver</tissue>
    </source>
</reference>
<reference key="2">
    <citation type="journal article" date="2004" name="Genome Res.">
        <title>The status, quality, and expansion of the NIH full-length cDNA project: the Mammalian Gene Collection (MGC).</title>
        <authorList>
            <consortium name="The MGC Project Team"/>
        </authorList>
    </citation>
    <scope>NUCLEOTIDE SEQUENCE [LARGE SCALE MRNA]</scope>
    <source>
        <tissue>Brain</tissue>
    </source>
</reference>
<reference key="3">
    <citation type="submission" date="1992-09" db="EMBL/GenBank/DDBJ databases">
        <title>Isolation of a cloned cDNA encoding the rat S13 ribosomal protein.</title>
        <authorList>
            <person name="Denis M.G."/>
        </authorList>
    </citation>
    <scope>NUCLEOTIDE SEQUENCE [MRNA] OF 123-151</scope>
</reference>
<name>RS13_RAT</name>
<evidence type="ECO:0000250" key="1">
    <source>
        <dbReference type="UniProtKB" id="P62277"/>
    </source>
</evidence>
<evidence type="ECO:0000250" key="2">
    <source>
        <dbReference type="UniProtKB" id="P62301"/>
    </source>
</evidence>
<evidence type="ECO:0000305" key="3"/>